<sequence>MRSDKIKKGVEQAPARSLLHATGQIKSPGDMDKPFIAICNSYIDIVPGHVHLRELADVAKEAIREAGGIPFEFNTIGVDDGIAMGHIGMRYSLPSREVIADAAETVINAHWFDGVFYIPNCDKITPGMLLASVRTNVPAIFCSGGPMKAGLSAHGKALTLSSVFEAVGAFKDGSMSQEDFLDMEANACPTCGSCAGMFTANSMNCLMEILGMAVPGNGTTLAVSDARRDLIRESAFHLMDLVKKDIRPRDIITKDAIDDAFALDMAMGGSTNTVLHTLALANEAGIEDYDLERINDIAKRVPYLSKIAPSSSYSMHDVHEAGGVSAIVKELVDLGGAIHPDRITVTGKTIRENVADAKINNTDVIHPKENPYSPVGGLSMLFGNIAPKGAAIKVGGVDPSVQVFKGEAICFSSHDEAVEAIDNHTVREGHVVVIRYEGPKGGPGMPEMLAPTSSIVGRGLGKDVALITDGRFSGATRGIAVGHISPEAAAGGPIALVHDGDIITIDLPNRTLNVDVPDEVLEERRKELPKFKAKVKTGYLARYTALVTSAHTGGILQIPEDLID</sequence>
<name>ILVD_LISMH</name>
<feature type="chain" id="PRO_1000190669" description="Dihydroxy-acid dehydratase">
    <location>
        <begin position="1"/>
        <end position="564"/>
    </location>
</feature>
<feature type="active site" description="Proton acceptor" evidence="1">
    <location>
        <position position="473"/>
    </location>
</feature>
<feature type="binding site" evidence="1">
    <location>
        <position position="80"/>
    </location>
    <ligand>
        <name>Mg(2+)</name>
        <dbReference type="ChEBI" id="CHEBI:18420"/>
    </ligand>
</feature>
<feature type="binding site" evidence="1">
    <location>
        <position position="121"/>
    </location>
    <ligand>
        <name>[2Fe-2S] cluster</name>
        <dbReference type="ChEBI" id="CHEBI:190135"/>
    </ligand>
</feature>
<feature type="binding site" evidence="1">
    <location>
        <position position="122"/>
    </location>
    <ligand>
        <name>Mg(2+)</name>
        <dbReference type="ChEBI" id="CHEBI:18420"/>
    </ligand>
</feature>
<feature type="binding site" description="via carbamate group" evidence="1">
    <location>
        <position position="123"/>
    </location>
    <ligand>
        <name>Mg(2+)</name>
        <dbReference type="ChEBI" id="CHEBI:18420"/>
    </ligand>
</feature>
<feature type="binding site" evidence="1">
    <location>
        <position position="194"/>
    </location>
    <ligand>
        <name>[2Fe-2S] cluster</name>
        <dbReference type="ChEBI" id="CHEBI:190135"/>
    </ligand>
</feature>
<feature type="binding site" evidence="1">
    <location>
        <position position="447"/>
    </location>
    <ligand>
        <name>Mg(2+)</name>
        <dbReference type="ChEBI" id="CHEBI:18420"/>
    </ligand>
</feature>
<feature type="modified residue" description="N6-carboxylysine" evidence="1">
    <location>
        <position position="123"/>
    </location>
</feature>
<comment type="function">
    <text evidence="1">Functions in the biosynthesis of branched-chain amino acids. Catalyzes the dehydration of (2R,3R)-2,3-dihydroxy-3-methylpentanoate (2,3-dihydroxy-3-methylvalerate) into 2-oxo-3-methylpentanoate (2-oxo-3-methylvalerate) and of (2R)-2,3-dihydroxy-3-methylbutanoate (2,3-dihydroxyisovalerate) into 2-oxo-3-methylbutanoate (2-oxoisovalerate), the penultimate precursor to L-isoleucine and L-valine, respectively.</text>
</comment>
<comment type="catalytic activity">
    <reaction evidence="1">
        <text>(2R)-2,3-dihydroxy-3-methylbutanoate = 3-methyl-2-oxobutanoate + H2O</text>
        <dbReference type="Rhea" id="RHEA:24809"/>
        <dbReference type="ChEBI" id="CHEBI:11851"/>
        <dbReference type="ChEBI" id="CHEBI:15377"/>
        <dbReference type="ChEBI" id="CHEBI:49072"/>
        <dbReference type="EC" id="4.2.1.9"/>
    </reaction>
    <physiologicalReaction direction="left-to-right" evidence="1">
        <dbReference type="Rhea" id="RHEA:24810"/>
    </physiologicalReaction>
</comment>
<comment type="catalytic activity">
    <reaction evidence="1">
        <text>(2R,3R)-2,3-dihydroxy-3-methylpentanoate = (S)-3-methyl-2-oxopentanoate + H2O</text>
        <dbReference type="Rhea" id="RHEA:27694"/>
        <dbReference type="ChEBI" id="CHEBI:15377"/>
        <dbReference type="ChEBI" id="CHEBI:35146"/>
        <dbReference type="ChEBI" id="CHEBI:49258"/>
        <dbReference type="EC" id="4.2.1.9"/>
    </reaction>
    <physiologicalReaction direction="left-to-right" evidence="1">
        <dbReference type="Rhea" id="RHEA:27695"/>
    </physiologicalReaction>
</comment>
<comment type="cofactor">
    <cofactor evidence="1">
        <name>[2Fe-2S] cluster</name>
        <dbReference type="ChEBI" id="CHEBI:190135"/>
    </cofactor>
    <text evidence="1">Binds 1 [2Fe-2S] cluster per subunit. This cluster acts as a Lewis acid cofactor.</text>
</comment>
<comment type="cofactor">
    <cofactor evidence="1">
        <name>Mg(2+)</name>
        <dbReference type="ChEBI" id="CHEBI:18420"/>
    </cofactor>
</comment>
<comment type="pathway">
    <text evidence="1">Amino-acid biosynthesis; L-isoleucine biosynthesis; L-isoleucine from 2-oxobutanoate: step 3/4.</text>
</comment>
<comment type="pathway">
    <text evidence="1">Amino-acid biosynthesis; L-valine biosynthesis; L-valine from pyruvate: step 3/4.</text>
</comment>
<comment type="subunit">
    <text evidence="1">Homodimer.</text>
</comment>
<comment type="similarity">
    <text evidence="1">Belongs to the IlvD/Edd family.</text>
</comment>
<reference key="1">
    <citation type="journal article" date="2011" name="J. Bacteriol.">
        <title>Genome sequence of lineage III Listeria monocytogenes strain HCC23.</title>
        <authorList>
            <person name="Steele C.L."/>
            <person name="Donaldson J.R."/>
            <person name="Paul D."/>
            <person name="Banes M.M."/>
            <person name="Arick T."/>
            <person name="Bridges S.M."/>
            <person name="Lawrence M.L."/>
        </authorList>
    </citation>
    <scope>NUCLEOTIDE SEQUENCE [LARGE SCALE GENOMIC DNA]</scope>
    <source>
        <strain>HCC23</strain>
    </source>
</reference>
<gene>
    <name evidence="1" type="primary">ilvD</name>
    <name type="ordered locus">LMHCC_0577</name>
</gene>
<organism>
    <name type="scientific">Listeria monocytogenes serotype 4a (strain HCC23)</name>
    <dbReference type="NCBI Taxonomy" id="552536"/>
    <lineage>
        <taxon>Bacteria</taxon>
        <taxon>Bacillati</taxon>
        <taxon>Bacillota</taxon>
        <taxon>Bacilli</taxon>
        <taxon>Bacillales</taxon>
        <taxon>Listeriaceae</taxon>
        <taxon>Listeria</taxon>
    </lineage>
</organism>
<dbReference type="EC" id="4.2.1.9" evidence="1"/>
<dbReference type="EMBL" id="CP001175">
    <property type="protein sequence ID" value="ACK38934.1"/>
    <property type="molecule type" value="Genomic_DNA"/>
</dbReference>
<dbReference type="RefSeq" id="WP_003728794.1">
    <property type="nucleotide sequence ID" value="NC_011660.1"/>
</dbReference>
<dbReference type="SMR" id="B8DBU8"/>
<dbReference type="GeneID" id="87011078"/>
<dbReference type="KEGG" id="lmh:LMHCC_0577"/>
<dbReference type="HOGENOM" id="CLU_014271_4_2_9"/>
<dbReference type="UniPathway" id="UPA00047">
    <property type="reaction ID" value="UER00057"/>
</dbReference>
<dbReference type="UniPathway" id="UPA00049">
    <property type="reaction ID" value="UER00061"/>
</dbReference>
<dbReference type="GO" id="GO:0005829">
    <property type="term" value="C:cytosol"/>
    <property type="evidence" value="ECO:0007669"/>
    <property type="project" value="TreeGrafter"/>
</dbReference>
<dbReference type="GO" id="GO:0051537">
    <property type="term" value="F:2 iron, 2 sulfur cluster binding"/>
    <property type="evidence" value="ECO:0007669"/>
    <property type="project" value="UniProtKB-UniRule"/>
</dbReference>
<dbReference type="GO" id="GO:0004160">
    <property type="term" value="F:dihydroxy-acid dehydratase activity"/>
    <property type="evidence" value="ECO:0007669"/>
    <property type="project" value="UniProtKB-UniRule"/>
</dbReference>
<dbReference type="GO" id="GO:0000287">
    <property type="term" value="F:magnesium ion binding"/>
    <property type="evidence" value="ECO:0007669"/>
    <property type="project" value="UniProtKB-UniRule"/>
</dbReference>
<dbReference type="GO" id="GO:0009097">
    <property type="term" value="P:isoleucine biosynthetic process"/>
    <property type="evidence" value="ECO:0007669"/>
    <property type="project" value="UniProtKB-UniRule"/>
</dbReference>
<dbReference type="GO" id="GO:0009099">
    <property type="term" value="P:L-valine biosynthetic process"/>
    <property type="evidence" value="ECO:0007669"/>
    <property type="project" value="UniProtKB-UniRule"/>
</dbReference>
<dbReference type="FunFam" id="3.50.30.80:FF:000001">
    <property type="entry name" value="Dihydroxy-acid dehydratase"/>
    <property type="match status" value="1"/>
</dbReference>
<dbReference type="Gene3D" id="3.50.30.80">
    <property type="entry name" value="IlvD/EDD C-terminal domain-like"/>
    <property type="match status" value="1"/>
</dbReference>
<dbReference type="HAMAP" id="MF_00012">
    <property type="entry name" value="IlvD"/>
    <property type="match status" value="1"/>
</dbReference>
<dbReference type="InterPro" id="IPR042096">
    <property type="entry name" value="Dihydro-acid_dehy_C"/>
</dbReference>
<dbReference type="InterPro" id="IPR004404">
    <property type="entry name" value="DihydroxyA_deHydtase"/>
</dbReference>
<dbReference type="InterPro" id="IPR020558">
    <property type="entry name" value="DiOHA_6PGluconate_deHydtase_CS"/>
</dbReference>
<dbReference type="InterPro" id="IPR056740">
    <property type="entry name" value="ILV_EDD_C"/>
</dbReference>
<dbReference type="InterPro" id="IPR000581">
    <property type="entry name" value="ILV_EDD_N"/>
</dbReference>
<dbReference type="InterPro" id="IPR037237">
    <property type="entry name" value="IlvD/EDD_N"/>
</dbReference>
<dbReference type="NCBIfam" id="TIGR00110">
    <property type="entry name" value="ilvD"/>
    <property type="match status" value="1"/>
</dbReference>
<dbReference type="NCBIfam" id="NF002068">
    <property type="entry name" value="PRK00911.1"/>
    <property type="match status" value="1"/>
</dbReference>
<dbReference type="PANTHER" id="PTHR43661">
    <property type="entry name" value="D-XYLONATE DEHYDRATASE"/>
    <property type="match status" value="1"/>
</dbReference>
<dbReference type="PANTHER" id="PTHR43661:SF3">
    <property type="entry name" value="D-XYLONATE DEHYDRATASE YAGF-RELATED"/>
    <property type="match status" value="1"/>
</dbReference>
<dbReference type="Pfam" id="PF24877">
    <property type="entry name" value="ILV_EDD_C"/>
    <property type="match status" value="1"/>
</dbReference>
<dbReference type="Pfam" id="PF00920">
    <property type="entry name" value="ILVD_EDD_N"/>
    <property type="match status" value="1"/>
</dbReference>
<dbReference type="SUPFAM" id="SSF143975">
    <property type="entry name" value="IlvD/EDD N-terminal domain-like"/>
    <property type="match status" value="1"/>
</dbReference>
<dbReference type="SUPFAM" id="SSF52016">
    <property type="entry name" value="LeuD/IlvD-like"/>
    <property type="match status" value="1"/>
</dbReference>
<dbReference type="PROSITE" id="PS00886">
    <property type="entry name" value="ILVD_EDD_1"/>
    <property type="match status" value="1"/>
</dbReference>
<dbReference type="PROSITE" id="PS00887">
    <property type="entry name" value="ILVD_EDD_2"/>
    <property type="match status" value="1"/>
</dbReference>
<protein>
    <recommendedName>
        <fullName evidence="1">Dihydroxy-acid dehydratase</fullName>
        <shortName evidence="1">DAD</shortName>
        <ecNumber evidence="1">4.2.1.9</ecNumber>
    </recommendedName>
</protein>
<proteinExistence type="inferred from homology"/>
<accession>B8DBU8</accession>
<keyword id="KW-0001">2Fe-2S</keyword>
<keyword id="KW-0028">Amino-acid biosynthesis</keyword>
<keyword id="KW-0100">Branched-chain amino acid biosynthesis</keyword>
<keyword id="KW-0408">Iron</keyword>
<keyword id="KW-0411">Iron-sulfur</keyword>
<keyword id="KW-0456">Lyase</keyword>
<keyword id="KW-0460">Magnesium</keyword>
<keyword id="KW-0479">Metal-binding</keyword>
<evidence type="ECO:0000255" key="1">
    <source>
        <dbReference type="HAMAP-Rule" id="MF_00012"/>
    </source>
</evidence>